<evidence type="ECO:0000255" key="1">
    <source>
        <dbReference type="HAMAP-Rule" id="MF_01353"/>
    </source>
</evidence>
<feature type="chain" id="PRO_1000166646" description="NAD(P)H-quinone oxidoreductase subunit N">
    <location>
        <begin position="1"/>
        <end position="158"/>
    </location>
</feature>
<name>NDHN_CYAP4</name>
<gene>
    <name evidence="1" type="primary">ndhN</name>
    <name type="ordered locus">Cyan7425_0598</name>
</gene>
<comment type="function">
    <text evidence="1">NDH-1 shuttles electrons from an unknown electron donor, via FMN and iron-sulfur (Fe-S) centers, to quinones in the respiratory and/or the photosynthetic chain. The immediate electron acceptor for the enzyme in this species is believed to be plastoquinone. Couples the redox reaction to proton translocation, and thus conserves the redox energy in a proton gradient. Cyanobacterial NDH-1 also plays a role in inorganic carbon-concentration.</text>
</comment>
<comment type="catalytic activity">
    <reaction evidence="1">
        <text>a plastoquinone + NADH + (n+1) H(+)(in) = a plastoquinol + NAD(+) + n H(+)(out)</text>
        <dbReference type="Rhea" id="RHEA:42608"/>
        <dbReference type="Rhea" id="RHEA-COMP:9561"/>
        <dbReference type="Rhea" id="RHEA-COMP:9562"/>
        <dbReference type="ChEBI" id="CHEBI:15378"/>
        <dbReference type="ChEBI" id="CHEBI:17757"/>
        <dbReference type="ChEBI" id="CHEBI:57540"/>
        <dbReference type="ChEBI" id="CHEBI:57945"/>
        <dbReference type="ChEBI" id="CHEBI:62192"/>
    </reaction>
</comment>
<comment type="catalytic activity">
    <reaction evidence="1">
        <text>a plastoquinone + NADPH + (n+1) H(+)(in) = a plastoquinol + NADP(+) + n H(+)(out)</text>
        <dbReference type="Rhea" id="RHEA:42612"/>
        <dbReference type="Rhea" id="RHEA-COMP:9561"/>
        <dbReference type="Rhea" id="RHEA-COMP:9562"/>
        <dbReference type="ChEBI" id="CHEBI:15378"/>
        <dbReference type="ChEBI" id="CHEBI:17757"/>
        <dbReference type="ChEBI" id="CHEBI:57783"/>
        <dbReference type="ChEBI" id="CHEBI:58349"/>
        <dbReference type="ChEBI" id="CHEBI:62192"/>
    </reaction>
</comment>
<comment type="subunit">
    <text evidence="1">NDH-1 can be composed of about 15 different subunits; different subcomplexes with different compositions have been identified which probably have different functions.</text>
</comment>
<comment type="subcellular location">
    <subcellularLocation>
        <location evidence="1">Cellular thylakoid membrane</location>
        <topology evidence="1">Peripheral membrane protein</topology>
        <orientation evidence="1">Cytoplasmic side</orientation>
    </subcellularLocation>
</comment>
<comment type="similarity">
    <text evidence="1">Belongs to the complex I NdhN subunit family.</text>
</comment>
<dbReference type="EC" id="7.1.1.-" evidence="1"/>
<dbReference type="EMBL" id="CP001344">
    <property type="protein sequence ID" value="ACL42988.1"/>
    <property type="molecule type" value="Genomic_DNA"/>
</dbReference>
<dbReference type="SMR" id="B8HUU1"/>
<dbReference type="STRING" id="395961.Cyan7425_0598"/>
<dbReference type="KEGG" id="cyn:Cyan7425_0598"/>
<dbReference type="eggNOG" id="ENOG502ZBMI">
    <property type="taxonomic scope" value="Bacteria"/>
</dbReference>
<dbReference type="HOGENOM" id="CLU_087432_0_0_3"/>
<dbReference type="OrthoDB" id="510798at2"/>
<dbReference type="GO" id="GO:0031676">
    <property type="term" value="C:plasma membrane-derived thylakoid membrane"/>
    <property type="evidence" value="ECO:0007669"/>
    <property type="project" value="UniProtKB-SubCell"/>
</dbReference>
<dbReference type="GO" id="GO:0016655">
    <property type="term" value="F:oxidoreductase activity, acting on NAD(P)H, quinone or similar compound as acceptor"/>
    <property type="evidence" value="ECO:0007669"/>
    <property type="project" value="UniProtKB-UniRule"/>
</dbReference>
<dbReference type="GO" id="GO:0048038">
    <property type="term" value="F:quinone binding"/>
    <property type="evidence" value="ECO:0007669"/>
    <property type="project" value="UniProtKB-KW"/>
</dbReference>
<dbReference type="HAMAP" id="MF_01353">
    <property type="entry name" value="NDH1_NDH1N"/>
    <property type="match status" value="1"/>
</dbReference>
<dbReference type="InterPro" id="IPR020874">
    <property type="entry name" value="NAD(P)H-quinone_OxRdtase_su_N"/>
</dbReference>
<dbReference type="PANTHER" id="PTHR35515">
    <property type="entry name" value="NAD(P)H-QUINONE OXIDOREDUCTASE SUBUNIT N, CHLOROPLASTIC"/>
    <property type="match status" value="1"/>
</dbReference>
<dbReference type="PANTHER" id="PTHR35515:SF1">
    <property type="entry name" value="NAD(P)H-QUINONE OXIDOREDUCTASE SUBUNIT N, CHLOROPLASTIC"/>
    <property type="match status" value="1"/>
</dbReference>
<dbReference type="Pfam" id="PF11909">
    <property type="entry name" value="NdhN"/>
    <property type="match status" value="1"/>
</dbReference>
<organism>
    <name type="scientific">Cyanothece sp. (strain PCC 7425 / ATCC 29141)</name>
    <dbReference type="NCBI Taxonomy" id="395961"/>
    <lineage>
        <taxon>Bacteria</taxon>
        <taxon>Bacillati</taxon>
        <taxon>Cyanobacteriota</taxon>
        <taxon>Cyanophyceae</taxon>
        <taxon>Gomontiellales</taxon>
        <taxon>Cyanothecaceae</taxon>
        <taxon>Cyanothece</taxon>
    </lineage>
</organism>
<sequence>MALFTTGRQFIQDLEKSGALGIYVPSEGGFEGRYQRRLRAAGYSTLHISAPGLGDLPSYLTQVHGVRPPHLGKSTQGNTDWGVKTFFLPPLVNYHLENLPPKARGLVLWMIDGKRLSRQELAYLSILPAQEPKVKIVIELGGDRQFRWQPLKEMAAAA</sequence>
<protein>
    <recommendedName>
        <fullName evidence="1">NAD(P)H-quinone oxidoreductase subunit N</fullName>
        <ecNumber evidence="1">7.1.1.-</ecNumber>
    </recommendedName>
    <alternativeName>
        <fullName evidence="1">NAD(P)H dehydrogenase I subunit N</fullName>
        <shortName evidence="1">NDH-1 subunit N</shortName>
        <shortName evidence="1">NDH-N</shortName>
    </alternativeName>
</protein>
<proteinExistence type="inferred from homology"/>
<keyword id="KW-0472">Membrane</keyword>
<keyword id="KW-0520">NAD</keyword>
<keyword id="KW-0521">NADP</keyword>
<keyword id="KW-0618">Plastoquinone</keyword>
<keyword id="KW-0874">Quinone</keyword>
<keyword id="KW-0793">Thylakoid</keyword>
<keyword id="KW-1278">Translocase</keyword>
<keyword id="KW-0813">Transport</keyword>
<accession>B8HUU1</accession>
<reference key="1">
    <citation type="journal article" date="2011" name="MBio">
        <title>Novel metabolic attributes of the genus Cyanothece, comprising a group of unicellular nitrogen-fixing Cyanobacteria.</title>
        <authorList>
            <person name="Bandyopadhyay A."/>
            <person name="Elvitigala T."/>
            <person name="Welsh E."/>
            <person name="Stockel J."/>
            <person name="Liberton M."/>
            <person name="Min H."/>
            <person name="Sherman L.A."/>
            <person name="Pakrasi H.B."/>
        </authorList>
    </citation>
    <scope>NUCLEOTIDE SEQUENCE [LARGE SCALE GENOMIC DNA]</scope>
    <source>
        <strain>PCC 7425 / ATCC 29141</strain>
    </source>
</reference>